<dbReference type="EC" id="1.1.1.38" evidence="1"/>
<dbReference type="EMBL" id="CP000880">
    <property type="protein sequence ID" value="ABX21300.1"/>
    <property type="molecule type" value="Genomic_DNA"/>
</dbReference>
<dbReference type="SMR" id="A9MR05"/>
<dbReference type="STRING" id="41514.SARI_01403"/>
<dbReference type="KEGG" id="ses:SARI_01403"/>
<dbReference type="HOGENOM" id="CLU_011405_5_2_6"/>
<dbReference type="Proteomes" id="UP000002084">
    <property type="component" value="Chromosome"/>
</dbReference>
<dbReference type="GO" id="GO:0005829">
    <property type="term" value="C:cytosol"/>
    <property type="evidence" value="ECO:0007669"/>
    <property type="project" value="TreeGrafter"/>
</dbReference>
<dbReference type="GO" id="GO:0004471">
    <property type="term" value="F:malate dehydrogenase (decarboxylating) (NAD+) activity"/>
    <property type="evidence" value="ECO:0007669"/>
    <property type="project" value="UniProtKB-UniRule"/>
</dbReference>
<dbReference type="GO" id="GO:0046872">
    <property type="term" value="F:metal ion binding"/>
    <property type="evidence" value="ECO:0007669"/>
    <property type="project" value="UniProtKB-KW"/>
</dbReference>
<dbReference type="GO" id="GO:0051287">
    <property type="term" value="F:NAD binding"/>
    <property type="evidence" value="ECO:0007669"/>
    <property type="project" value="InterPro"/>
</dbReference>
<dbReference type="GO" id="GO:0008948">
    <property type="term" value="F:oxaloacetate decarboxylase activity"/>
    <property type="evidence" value="ECO:0007669"/>
    <property type="project" value="UniProtKB-UniRule"/>
</dbReference>
<dbReference type="GO" id="GO:0006108">
    <property type="term" value="P:malate metabolic process"/>
    <property type="evidence" value="ECO:0007669"/>
    <property type="project" value="TreeGrafter"/>
</dbReference>
<dbReference type="CDD" id="cd05312">
    <property type="entry name" value="NAD_bind_1_malic_enz"/>
    <property type="match status" value="1"/>
</dbReference>
<dbReference type="FunFam" id="3.40.50.10380:FF:000001">
    <property type="entry name" value="NAD-dependent malic enzyme"/>
    <property type="match status" value="1"/>
</dbReference>
<dbReference type="FunFam" id="3.40.50.720:FF:000055">
    <property type="entry name" value="NAD-dependent malic enzyme"/>
    <property type="match status" value="1"/>
</dbReference>
<dbReference type="Gene3D" id="3.40.50.10380">
    <property type="entry name" value="Malic enzyme, N-terminal domain"/>
    <property type="match status" value="1"/>
</dbReference>
<dbReference type="Gene3D" id="3.40.50.720">
    <property type="entry name" value="NAD(P)-binding Rossmann-like Domain"/>
    <property type="match status" value="1"/>
</dbReference>
<dbReference type="HAMAP" id="MF_01619">
    <property type="entry name" value="NAD_malic_enz"/>
    <property type="match status" value="1"/>
</dbReference>
<dbReference type="InterPro" id="IPR046346">
    <property type="entry name" value="Aminoacid_DH-like_N_sf"/>
</dbReference>
<dbReference type="InterPro" id="IPR015884">
    <property type="entry name" value="Malic_enzyme_CS"/>
</dbReference>
<dbReference type="InterPro" id="IPR012301">
    <property type="entry name" value="Malic_N_dom"/>
</dbReference>
<dbReference type="InterPro" id="IPR037062">
    <property type="entry name" value="Malic_N_dom_sf"/>
</dbReference>
<dbReference type="InterPro" id="IPR012302">
    <property type="entry name" value="Malic_NAD-bd"/>
</dbReference>
<dbReference type="InterPro" id="IPR001891">
    <property type="entry name" value="Malic_OxRdtase"/>
</dbReference>
<dbReference type="InterPro" id="IPR036291">
    <property type="entry name" value="NAD(P)-bd_dom_sf"/>
</dbReference>
<dbReference type="InterPro" id="IPR023667">
    <property type="entry name" value="NAD_malic_enz_proteobac"/>
</dbReference>
<dbReference type="NCBIfam" id="NF010052">
    <property type="entry name" value="PRK13529.1"/>
    <property type="match status" value="1"/>
</dbReference>
<dbReference type="PANTHER" id="PTHR23406">
    <property type="entry name" value="MALIC ENZYME-RELATED"/>
    <property type="match status" value="1"/>
</dbReference>
<dbReference type="PANTHER" id="PTHR23406:SF34">
    <property type="entry name" value="NAD-DEPENDENT MALIC ENZYME, MITOCHONDRIAL"/>
    <property type="match status" value="1"/>
</dbReference>
<dbReference type="Pfam" id="PF00390">
    <property type="entry name" value="malic"/>
    <property type="match status" value="1"/>
</dbReference>
<dbReference type="Pfam" id="PF03949">
    <property type="entry name" value="Malic_M"/>
    <property type="match status" value="1"/>
</dbReference>
<dbReference type="PIRSF" id="PIRSF000106">
    <property type="entry name" value="ME"/>
    <property type="match status" value="1"/>
</dbReference>
<dbReference type="PRINTS" id="PR00072">
    <property type="entry name" value="MALOXRDTASE"/>
</dbReference>
<dbReference type="SMART" id="SM01274">
    <property type="entry name" value="malic"/>
    <property type="match status" value="1"/>
</dbReference>
<dbReference type="SMART" id="SM00919">
    <property type="entry name" value="Malic_M"/>
    <property type="match status" value="1"/>
</dbReference>
<dbReference type="SUPFAM" id="SSF53223">
    <property type="entry name" value="Aminoacid dehydrogenase-like, N-terminal domain"/>
    <property type="match status" value="1"/>
</dbReference>
<dbReference type="SUPFAM" id="SSF51735">
    <property type="entry name" value="NAD(P)-binding Rossmann-fold domains"/>
    <property type="match status" value="1"/>
</dbReference>
<dbReference type="PROSITE" id="PS00331">
    <property type="entry name" value="MALIC_ENZYMES"/>
    <property type="match status" value="1"/>
</dbReference>
<sequence length="565" mass="62930">METTTKKARSLYIPYAGPVLLEFPLLNKGSAFSVEERRNFNLSGLLPEVVESIEEQAERAWLQYQGFKTEIDKHIYLRNIQDTNETLFYRLVQNHLEEMMPVIYTPTVGAACERFSEIYRRARGVFISYPNRHNMDDILQNVPNHNIKVIVVTDGERILGLGDQGIGGMGIPIGKLSLYTACGGISPAYTLPVVLDVGTNNQQLLNDPLYMGWRHPRITDDEYYAFVDEFIQAVKQRWPDILLQFEDFAQKNAMPLLTRYRDEICSFNDDIQGTAAVTVGTLIAASRAAGSQLSEQKIVFLGAGSAGCGIAEQIIAQTQREGLSEDAARQKVFMVDRFGLLTDRMPNLLSFQTKLVQKCDNLQHWDTENDVLSLLDVVRNVKPDILIGVSGQTGLFTEEIIREMHKHCPRPIVMPLSNPTSRVEATPQDIIAWTEGNALVATGSPFSPVIWKDKVYPIAQCNNAYIFPGIGLGVIASGASRITDEMLMSASETLAKHSPLVNNGEGLVLPALKDIQVVSRAIAFAVGKMAQQQGVAVKTSAEALQQAIDDNFWKPEYRDYRRTSI</sequence>
<name>MAO1_SALAR</name>
<reference key="1">
    <citation type="submission" date="2007-11" db="EMBL/GenBank/DDBJ databases">
        <authorList>
            <consortium name="The Salmonella enterica serovar Arizonae Genome Sequencing Project"/>
            <person name="McClelland M."/>
            <person name="Sanderson E.K."/>
            <person name="Porwollik S."/>
            <person name="Spieth J."/>
            <person name="Clifton W.S."/>
            <person name="Fulton R."/>
            <person name="Chunyan W."/>
            <person name="Wollam A."/>
            <person name="Shah N."/>
            <person name="Pepin K."/>
            <person name="Bhonagiri V."/>
            <person name="Nash W."/>
            <person name="Johnson M."/>
            <person name="Thiruvilangam P."/>
            <person name="Wilson R."/>
        </authorList>
    </citation>
    <scope>NUCLEOTIDE SEQUENCE [LARGE SCALE GENOMIC DNA]</scope>
    <source>
        <strain>ATCC BAA-731 / CDC346-86 / RSK2980</strain>
    </source>
</reference>
<comment type="catalytic activity">
    <reaction evidence="1">
        <text>(S)-malate + NAD(+) = pyruvate + CO2 + NADH</text>
        <dbReference type="Rhea" id="RHEA:12653"/>
        <dbReference type="ChEBI" id="CHEBI:15361"/>
        <dbReference type="ChEBI" id="CHEBI:15589"/>
        <dbReference type="ChEBI" id="CHEBI:16526"/>
        <dbReference type="ChEBI" id="CHEBI:57540"/>
        <dbReference type="ChEBI" id="CHEBI:57945"/>
        <dbReference type="EC" id="1.1.1.38"/>
    </reaction>
</comment>
<comment type="catalytic activity">
    <reaction evidence="1">
        <text>oxaloacetate + H(+) = pyruvate + CO2</text>
        <dbReference type="Rhea" id="RHEA:15641"/>
        <dbReference type="ChEBI" id="CHEBI:15361"/>
        <dbReference type="ChEBI" id="CHEBI:15378"/>
        <dbReference type="ChEBI" id="CHEBI:16452"/>
        <dbReference type="ChEBI" id="CHEBI:16526"/>
        <dbReference type="EC" id="1.1.1.38"/>
    </reaction>
</comment>
<comment type="cofactor">
    <cofactor evidence="1">
        <name>Mg(2+)</name>
        <dbReference type="ChEBI" id="CHEBI:18420"/>
    </cofactor>
    <cofactor evidence="1">
        <name>Mn(2+)</name>
        <dbReference type="ChEBI" id="CHEBI:29035"/>
    </cofactor>
    <text evidence="1">Divalent metal cations. Prefers magnesium or manganese.</text>
</comment>
<comment type="subunit">
    <text evidence="1">Homotetramer.</text>
</comment>
<comment type="similarity">
    <text evidence="1">Belongs to the malic enzymes family.</text>
</comment>
<keyword id="KW-0479">Metal-binding</keyword>
<keyword id="KW-0520">NAD</keyword>
<keyword id="KW-0560">Oxidoreductase</keyword>
<keyword id="KW-1185">Reference proteome</keyword>
<evidence type="ECO:0000255" key="1">
    <source>
        <dbReference type="HAMAP-Rule" id="MF_01619"/>
    </source>
</evidence>
<gene>
    <name evidence="1" type="primary">maeA</name>
    <name type="ordered locus">SARI_01403</name>
</gene>
<protein>
    <recommendedName>
        <fullName evidence="1">NAD-dependent malic enzyme</fullName>
        <shortName evidence="1">NAD-ME</shortName>
        <ecNumber evidence="1">1.1.1.38</ecNumber>
    </recommendedName>
</protein>
<proteinExistence type="inferred from homology"/>
<organism>
    <name type="scientific">Salmonella arizonae (strain ATCC BAA-731 / CDC346-86 / RSK2980)</name>
    <dbReference type="NCBI Taxonomy" id="41514"/>
    <lineage>
        <taxon>Bacteria</taxon>
        <taxon>Pseudomonadati</taxon>
        <taxon>Pseudomonadota</taxon>
        <taxon>Gammaproteobacteria</taxon>
        <taxon>Enterobacterales</taxon>
        <taxon>Enterobacteriaceae</taxon>
        <taxon>Salmonella</taxon>
    </lineage>
</organism>
<feature type="chain" id="PRO_1000088072" description="NAD-dependent malic enzyme">
    <location>
        <begin position="1"/>
        <end position="565"/>
    </location>
</feature>
<feature type="active site" description="Proton donor" evidence="1">
    <location>
        <position position="104"/>
    </location>
</feature>
<feature type="active site" description="Proton acceptor" evidence="1">
    <location>
        <position position="175"/>
    </location>
</feature>
<feature type="binding site" evidence="1">
    <location>
        <position position="157"/>
    </location>
    <ligand>
        <name>NAD(+)</name>
        <dbReference type="ChEBI" id="CHEBI:57540"/>
    </ligand>
</feature>
<feature type="binding site" evidence="1">
    <location>
        <position position="246"/>
    </location>
    <ligand>
        <name>a divalent metal cation</name>
        <dbReference type="ChEBI" id="CHEBI:60240"/>
    </ligand>
</feature>
<feature type="binding site" evidence="1">
    <location>
        <position position="247"/>
    </location>
    <ligand>
        <name>a divalent metal cation</name>
        <dbReference type="ChEBI" id="CHEBI:60240"/>
    </ligand>
</feature>
<feature type="binding site" evidence="1">
    <location>
        <position position="270"/>
    </location>
    <ligand>
        <name>a divalent metal cation</name>
        <dbReference type="ChEBI" id="CHEBI:60240"/>
    </ligand>
</feature>
<feature type="binding site" evidence="1">
    <location>
        <position position="270"/>
    </location>
    <ligand>
        <name>NAD(+)</name>
        <dbReference type="ChEBI" id="CHEBI:57540"/>
    </ligand>
</feature>
<feature type="binding site" evidence="1">
    <location>
        <position position="418"/>
    </location>
    <ligand>
        <name>NAD(+)</name>
        <dbReference type="ChEBI" id="CHEBI:57540"/>
    </ligand>
</feature>
<feature type="site" description="Important for activity" evidence="1">
    <location>
        <position position="270"/>
    </location>
</feature>
<accession>A9MR05</accession>